<keyword id="KW-0520">NAD</keyword>
<keyword id="KW-0560">Oxidoreductase</keyword>
<keyword id="KW-1185">Reference proteome</keyword>
<evidence type="ECO:0000255" key="1">
    <source>
        <dbReference type="HAMAP-Rule" id="MF_01670"/>
    </source>
</evidence>
<protein>
    <recommendedName>
        <fullName evidence="1">Malonate-semialdehyde dehydrogenase</fullName>
        <shortName evidence="1">MSA dehydrogenase</shortName>
        <ecNumber evidence="1">1.2.1.27</ecNumber>
    </recommendedName>
    <alternativeName>
        <fullName evidence="1">Methylmalonate-semialdehyde dehydrogenase</fullName>
        <shortName evidence="1">MMSA dehydrogenase</shortName>
        <shortName evidence="1">MSDH</shortName>
    </alternativeName>
</protein>
<comment type="function">
    <text evidence="1">Catalyzes the oxidation of malonate semialdehyde (MSA) and methylmalonate semialdehyde (MMSA) into acetyl-CoA and propanoyl-CoA, respectively. Is involved in a myo-inositol catabolic pathway. Bicarbonate, and not CO2, is the end-product of the enzymatic reaction.</text>
</comment>
<comment type="catalytic activity">
    <reaction evidence="1">
        <text>3-oxopropanoate + NAD(+) + CoA + H2O = hydrogencarbonate + acetyl-CoA + NADH + H(+)</text>
        <dbReference type="Rhea" id="RHEA:76615"/>
        <dbReference type="ChEBI" id="CHEBI:15377"/>
        <dbReference type="ChEBI" id="CHEBI:15378"/>
        <dbReference type="ChEBI" id="CHEBI:17544"/>
        <dbReference type="ChEBI" id="CHEBI:33190"/>
        <dbReference type="ChEBI" id="CHEBI:57287"/>
        <dbReference type="ChEBI" id="CHEBI:57288"/>
        <dbReference type="ChEBI" id="CHEBI:57540"/>
        <dbReference type="ChEBI" id="CHEBI:57945"/>
        <dbReference type="EC" id="1.2.1.27"/>
    </reaction>
    <physiologicalReaction direction="left-to-right" evidence="1">
        <dbReference type="Rhea" id="RHEA:76616"/>
    </physiologicalReaction>
</comment>
<comment type="catalytic activity">
    <reaction evidence="1">
        <text>2-methyl-3-oxopropanoate + NAD(+) + CoA + H2O = propanoyl-CoA + hydrogencarbonate + NADH + H(+)</text>
        <dbReference type="Rhea" id="RHEA:20804"/>
        <dbReference type="ChEBI" id="CHEBI:15377"/>
        <dbReference type="ChEBI" id="CHEBI:15378"/>
        <dbReference type="ChEBI" id="CHEBI:17544"/>
        <dbReference type="ChEBI" id="CHEBI:57287"/>
        <dbReference type="ChEBI" id="CHEBI:57392"/>
        <dbReference type="ChEBI" id="CHEBI:57540"/>
        <dbReference type="ChEBI" id="CHEBI:57700"/>
        <dbReference type="ChEBI" id="CHEBI:57945"/>
        <dbReference type="EC" id="1.2.1.27"/>
    </reaction>
    <physiologicalReaction direction="left-to-right" evidence="1">
        <dbReference type="Rhea" id="RHEA:20805"/>
    </physiologicalReaction>
</comment>
<comment type="pathway">
    <text evidence="1">Polyol metabolism; myo-inositol degradation into acetyl-CoA; acetyl-CoA from myo-inositol: step 7/7.</text>
</comment>
<comment type="subunit">
    <text evidence="1">Homotetramer.</text>
</comment>
<comment type="similarity">
    <text evidence="1">Belongs to the aldehyde dehydrogenase family. IolA subfamily.</text>
</comment>
<organism>
    <name type="scientific">Listeria monocytogenes serovar 1/2a (strain ATCC BAA-679 / EGD-e)</name>
    <dbReference type="NCBI Taxonomy" id="169963"/>
    <lineage>
        <taxon>Bacteria</taxon>
        <taxon>Bacillati</taxon>
        <taxon>Bacillota</taxon>
        <taxon>Bacilli</taxon>
        <taxon>Bacillales</taxon>
        <taxon>Listeriaceae</taxon>
        <taxon>Listeria</taxon>
    </lineage>
</organism>
<sequence>MADVRKLKNYIDGEWVESKTDKYEDVINPATGEVLCQVPISTRAELDQAAVIAEQAFEKWSQVAVPRRARVLFGFQQLLIQHKEELARLITLENGKNLSEARGEVQRGIENVEFAAGAPTLMMGDSLASIATDVEAANYRYPVGVVGGIAPFNFPMMVPCWMFPMAIALGNSFILKPSERTPLLMEKLVELFSEAGLPKGVFNVVYGAHDVVNGILENEIIKAVSFVGSKPVGEYVYKTGSANLKRVQALTGAKNHTIVLNDADLEDTVTNVISAAFGSAGERCMACAVVTVEEGIADEFLEALRTAAQNVKIGNGLDDGVFLGPVIREENQKRTIAYIEKGIEEGAKLTVDGRETGLSEGHFVGPTILEDVTTDMTIWKDEIFAPVLSVIRVKNLQEAVRVANQSEFANGACIFTNNAKAIRYFREKIDAGMLGVNLGVPAPMAFFPFSGWKSSFYGTLHANGKDSVDFYTHKKVVTARYSLKGYEE</sequence>
<gene>
    <name evidence="1" type="primary">iolA</name>
    <name type="ordered locus">lmo0383</name>
</gene>
<proteinExistence type="inferred from homology"/>
<name>IOLA_LISMO</name>
<reference key="1">
    <citation type="journal article" date="2001" name="Science">
        <title>Comparative genomics of Listeria species.</title>
        <authorList>
            <person name="Glaser P."/>
            <person name="Frangeul L."/>
            <person name="Buchrieser C."/>
            <person name="Rusniok C."/>
            <person name="Amend A."/>
            <person name="Baquero F."/>
            <person name="Berche P."/>
            <person name="Bloecker H."/>
            <person name="Brandt P."/>
            <person name="Chakraborty T."/>
            <person name="Charbit A."/>
            <person name="Chetouani F."/>
            <person name="Couve E."/>
            <person name="de Daruvar A."/>
            <person name="Dehoux P."/>
            <person name="Domann E."/>
            <person name="Dominguez-Bernal G."/>
            <person name="Duchaud E."/>
            <person name="Durant L."/>
            <person name="Dussurget O."/>
            <person name="Entian K.-D."/>
            <person name="Fsihi H."/>
            <person name="Garcia-del Portillo F."/>
            <person name="Garrido P."/>
            <person name="Gautier L."/>
            <person name="Goebel W."/>
            <person name="Gomez-Lopez N."/>
            <person name="Hain T."/>
            <person name="Hauf J."/>
            <person name="Jackson D."/>
            <person name="Jones L.-M."/>
            <person name="Kaerst U."/>
            <person name="Kreft J."/>
            <person name="Kuhn M."/>
            <person name="Kunst F."/>
            <person name="Kurapkat G."/>
            <person name="Madueno E."/>
            <person name="Maitournam A."/>
            <person name="Mata Vicente J."/>
            <person name="Ng E."/>
            <person name="Nedjari H."/>
            <person name="Nordsiek G."/>
            <person name="Novella S."/>
            <person name="de Pablos B."/>
            <person name="Perez-Diaz J.-C."/>
            <person name="Purcell R."/>
            <person name="Remmel B."/>
            <person name="Rose M."/>
            <person name="Schlueter T."/>
            <person name="Simoes N."/>
            <person name="Tierrez A."/>
            <person name="Vazquez-Boland J.-A."/>
            <person name="Voss H."/>
            <person name="Wehland J."/>
            <person name="Cossart P."/>
        </authorList>
    </citation>
    <scope>NUCLEOTIDE SEQUENCE [LARGE SCALE GENOMIC DNA]</scope>
    <source>
        <strain>ATCC BAA-679 / EGD-e</strain>
    </source>
</reference>
<accession>Q8Y9Y4</accession>
<dbReference type="EC" id="1.2.1.27" evidence="1"/>
<dbReference type="EMBL" id="AL591975">
    <property type="protein sequence ID" value="CAC98462.1"/>
    <property type="molecule type" value="Genomic_DNA"/>
</dbReference>
<dbReference type="PIR" id="AH1122">
    <property type="entry name" value="AH1122"/>
</dbReference>
<dbReference type="RefSeq" id="NP_463913.1">
    <property type="nucleotide sequence ID" value="NC_003210.1"/>
</dbReference>
<dbReference type="RefSeq" id="WP_010989444.1">
    <property type="nucleotide sequence ID" value="NZ_CP149495.1"/>
</dbReference>
<dbReference type="SMR" id="Q8Y9Y4"/>
<dbReference type="STRING" id="169963.gene:17593034"/>
<dbReference type="PaxDb" id="169963-lmo0383"/>
<dbReference type="EnsemblBacteria" id="CAC98462">
    <property type="protein sequence ID" value="CAC98462"/>
    <property type="gene ID" value="CAC98462"/>
</dbReference>
<dbReference type="GeneID" id="987639"/>
<dbReference type="KEGG" id="lmo:lmo0383"/>
<dbReference type="PATRIC" id="fig|169963.11.peg.396"/>
<dbReference type="eggNOG" id="COG1012">
    <property type="taxonomic scope" value="Bacteria"/>
</dbReference>
<dbReference type="HOGENOM" id="CLU_005391_1_10_9"/>
<dbReference type="OrthoDB" id="9762913at2"/>
<dbReference type="PhylomeDB" id="Q8Y9Y4"/>
<dbReference type="BioCyc" id="LMON169963:LMO0383-MONOMER"/>
<dbReference type="UniPathway" id="UPA00076">
    <property type="reaction ID" value="UER00148"/>
</dbReference>
<dbReference type="Proteomes" id="UP000000817">
    <property type="component" value="Chromosome"/>
</dbReference>
<dbReference type="GO" id="GO:0018478">
    <property type="term" value="F:malonate-semialdehyde dehydrogenase (acetylating) activity"/>
    <property type="evidence" value="ECO:0007669"/>
    <property type="project" value="UniProtKB-UniRule"/>
</dbReference>
<dbReference type="GO" id="GO:0004491">
    <property type="term" value="F:methylmalonate-semialdehyde dehydrogenase (acylating, NAD) activity"/>
    <property type="evidence" value="ECO:0000318"/>
    <property type="project" value="GO_Central"/>
</dbReference>
<dbReference type="GO" id="GO:0019310">
    <property type="term" value="P:inositol catabolic process"/>
    <property type="evidence" value="ECO:0007669"/>
    <property type="project" value="UniProtKB-UniRule"/>
</dbReference>
<dbReference type="GO" id="GO:0006210">
    <property type="term" value="P:thymine catabolic process"/>
    <property type="evidence" value="ECO:0000318"/>
    <property type="project" value="GO_Central"/>
</dbReference>
<dbReference type="GO" id="GO:0006574">
    <property type="term" value="P:valine catabolic process"/>
    <property type="evidence" value="ECO:0000318"/>
    <property type="project" value="GO_Central"/>
</dbReference>
<dbReference type="CDD" id="cd07085">
    <property type="entry name" value="ALDH_F6_MMSDH"/>
    <property type="match status" value="1"/>
</dbReference>
<dbReference type="FunFam" id="3.40.309.10:FF:000002">
    <property type="entry name" value="Methylmalonate-semialdehyde dehydrogenase (Acylating)"/>
    <property type="match status" value="1"/>
</dbReference>
<dbReference type="FunFam" id="3.40.605.10:FF:000003">
    <property type="entry name" value="Methylmalonate-semialdehyde dehydrogenase [acylating]"/>
    <property type="match status" value="1"/>
</dbReference>
<dbReference type="Gene3D" id="3.40.605.10">
    <property type="entry name" value="Aldehyde Dehydrogenase, Chain A, domain 1"/>
    <property type="match status" value="1"/>
</dbReference>
<dbReference type="Gene3D" id="3.40.309.10">
    <property type="entry name" value="Aldehyde Dehydrogenase, Chain A, domain 2"/>
    <property type="match status" value="1"/>
</dbReference>
<dbReference type="HAMAP" id="MF_01670">
    <property type="entry name" value="IolA"/>
    <property type="match status" value="1"/>
</dbReference>
<dbReference type="InterPro" id="IPR016161">
    <property type="entry name" value="Ald_DH/histidinol_DH"/>
</dbReference>
<dbReference type="InterPro" id="IPR016163">
    <property type="entry name" value="Ald_DH_C"/>
</dbReference>
<dbReference type="InterPro" id="IPR016160">
    <property type="entry name" value="Ald_DH_CS_CYS"/>
</dbReference>
<dbReference type="InterPro" id="IPR016162">
    <property type="entry name" value="Ald_DH_N"/>
</dbReference>
<dbReference type="InterPro" id="IPR015590">
    <property type="entry name" value="Aldehyde_DH_dom"/>
</dbReference>
<dbReference type="InterPro" id="IPR010061">
    <property type="entry name" value="MeMal-semiAld_DH"/>
</dbReference>
<dbReference type="InterPro" id="IPR023510">
    <property type="entry name" value="MSDH_GmP_bac"/>
</dbReference>
<dbReference type="NCBIfam" id="TIGR01722">
    <property type="entry name" value="MMSDH"/>
    <property type="match status" value="1"/>
</dbReference>
<dbReference type="PANTHER" id="PTHR43866">
    <property type="entry name" value="MALONATE-SEMIALDEHYDE DEHYDROGENASE"/>
    <property type="match status" value="1"/>
</dbReference>
<dbReference type="PANTHER" id="PTHR43866:SF4">
    <property type="entry name" value="MALONATE-SEMIALDEHYDE DEHYDROGENASE"/>
    <property type="match status" value="1"/>
</dbReference>
<dbReference type="Pfam" id="PF00171">
    <property type="entry name" value="Aldedh"/>
    <property type="match status" value="1"/>
</dbReference>
<dbReference type="SUPFAM" id="SSF53720">
    <property type="entry name" value="ALDH-like"/>
    <property type="match status" value="1"/>
</dbReference>
<dbReference type="PROSITE" id="PS00070">
    <property type="entry name" value="ALDEHYDE_DEHYDR_CYS"/>
    <property type="match status" value="1"/>
</dbReference>
<feature type="chain" id="PRO_0000352346" description="Malonate-semialdehyde dehydrogenase">
    <location>
        <begin position="1"/>
        <end position="488"/>
    </location>
</feature>
<feature type="active site" description="Nucleophile" evidence="1">
    <location>
        <position position="284"/>
    </location>
</feature>
<feature type="binding site" evidence="1">
    <location>
        <position position="150"/>
    </location>
    <ligand>
        <name>NAD(+)</name>
        <dbReference type="ChEBI" id="CHEBI:57540"/>
    </ligand>
</feature>
<feature type="binding site" evidence="1">
    <location>
        <position position="152"/>
    </location>
    <ligand>
        <name>NAD(+)</name>
        <dbReference type="ChEBI" id="CHEBI:57540"/>
    </ligand>
</feature>
<feature type="binding site" evidence="1">
    <location>
        <position position="176"/>
    </location>
    <ligand>
        <name>NAD(+)</name>
        <dbReference type="ChEBI" id="CHEBI:57540"/>
    </ligand>
</feature>
<feature type="binding site" evidence="1">
    <location>
        <position position="179"/>
    </location>
    <ligand>
        <name>NAD(+)</name>
        <dbReference type="ChEBI" id="CHEBI:57540"/>
    </ligand>
</feature>
<feature type="binding site" evidence="1">
    <location>
        <position position="180"/>
    </location>
    <ligand>
        <name>NAD(+)</name>
        <dbReference type="ChEBI" id="CHEBI:57540"/>
    </ligand>
</feature>
<feature type="binding site" evidence="1">
    <location>
        <position position="229"/>
    </location>
    <ligand>
        <name>NAD(+)</name>
        <dbReference type="ChEBI" id="CHEBI:57540"/>
    </ligand>
</feature>
<feature type="binding site" evidence="1">
    <location>
        <position position="251"/>
    </location>
    <ligand>
        <name>NAD(+)</name>
        <dbReference type="ChEBI" id="CHEBI:57540"/>
    </ligand>
</feature>
<feature type="binding site" evidence="1">
    <location>
        <position position="382"/>
    </location>
    <ligand>
        <name>NAD(+)</name>
        <dbReference type="ChEBI" id="CHEBI:57540"/>
    </ligand>
</feature>